<name>LEU1_CROS5</name>
<accession>B1WQQ4</accession>
<evidence type="ECO:0000255" key="1">
    <source>
        <dbReference type="HAMAP-Rule" id="MF_01025"/>
    </source>
</evidence>
<organism>
    <name type="scientific">Crocosphaera subtropica (strain ATCC 51142 / BH68)</name>
    <name type="common">Cyanothece sp. (strain ATCC 51142)</name>
    <dbReference type="NCBI Taxonomy" id="43989"/>
    <lineage>
        <taxon>Bacteria</taxon>
        <taxon>Bacillati</taxon>
        <taxon>Cyanobacteriota</taxon>
        <taxon>Cyanophyceae</taxon>
        <taxon>Oscillatoriophycideae</taxon>
        <taxon>Chroococcales</taxon>
        <taxon>Aphanothecaceae</taxon>
        <taxon>Crocosphaera</taxon>
        <taxon>Crocosphaera subtropica</taxon>
    </lineage>
</organism>
<protein>
    <recommendedName>
        <fullName evidence="1">2-isopropylmalate synthase</fullName>
        <ecNumber evidence="1">2.3.3.13</ecNumber>
    </recommendedName>
    <alternativeName>
        <fullName evidence="1">Alpha-IPM synthase</fullName>
    </alternativeName>
    <alternativeName>
        <fullName evidence="1">Alpha-isopropylmalate synthase</fullName>
    </alternativeName>
</protein>
<keyword id="KW-0028">Amino-acid biosynthesis</keyword>
<keyword id="KW-0100">Branched-chain amino acid biosynthesis</keyword>
<keyword id="KW-0963">Cytoplasm</keyword>
<keyword id="KW-0432">Leucine biosynthesis</keyword>
<keyword id="KW-0464">Manganese</keyword>
<keyword id="KW-0479">Metal-binding</keyword>
<keyword id="KW-1185">Reference proteome</keyword>
<keyword id="KW-0808">Transferase</keyword>
<gene>
    <name evidence="1" type="primary">leuA</name>
    <name type="ordered locus">cce_4008</name>
</gene>
<sequence length="537" mass="58474">MSNQPDHIIIFDTTLRDGEQSPGASLTVEEKLTIARALARLGVDIIEAGFPYASPGDFEAVQKIAKTVGNESGPRICGLARATKNDIKAAGEALKPAFKSRIHTFIATSDIHLKHKLKKTRQEVLAIVPEMVAYAKTFTDDVEFSPEDAGRSDPEFMYQVLETAIAAGATTVNIPDTVGYTTPSEFGALIKGIKDNVPNIDQAIISVHGHDDLGLAVANFLEALKNGARQLECTINGIGERAGNAALEELVMALHVRRQYFNPFLGRPVDSMEPLTNINTKEIYKTSRLVSNLTGMIVQPNKAIVGANAFAHESGIHQDGVLKNKLTYEIMDAESIGLTNNQIVLGKLSGRNAFRTRLDELGFELSERDLNNAFLRFKEVADKKKEITDWDLEAIVNDEIQQAPELFRLELVQVSCGDHSAPTATVTLRTPEGKELTDAAIGTGPVDAVYKAINRVVNVPNELIEFSVKSVTAGIDAMGEVTIRLRHEGRIYSGYAANTDIITASARAYISALNRLYGAIQEQTKVHPSEPVLTSKN</sequence>
<dbReference type="EC" id="2.3.3.13" evidence="1"/>
<dbReference type="EMBL" id="CP000806">
    <property type="protein sequence ID" value="ACB53356.1"/>
    <property type="molecule type" value="Genomic_DNA"/>
</dbReference>
<dbReference type="RefSeq" id="WP_009543901.1">
    <property type="nucleotide sequence ID" value="NC_010546.1"/>
</dbReference>
<dbReference type="SMR" id="B1WQQ4"/>
<dbReference type="STRING" id="43989.cce_4008"/>
<dbReference type="KEGG" id="cyt:cce_4008"/>
<dbReference type="eggNOG" id="COG0119">
    <property type="taxonomic scope" value="Bacteria"/>
</dbReference>
<dbReference type="HOGENOM" id="CLU_022158_0_1_3"/>
<dbReference type="OrthoDB" id="9804858at2"/>
<dbReference type="UniPathway" id="UPA00048">
    <property type="reaction ID" value="UER00070"/>
</dbReference>
<dbReference type="Proteomes" id="UP000001203">
    <property type="component" value="Chromosome circular"/>
</dbReference>
<dbReference type="GO" id="GO:0005737">
    <property type="term" value="C:cytoplasm"/>
    <property type="evidence" value="ECO:0007669"/>
    <property type="project" value="UniProtKB-SubCell"/>
</dbReference>
<dbReference type="GO" id="GO:0003852">
    <property type="term" value="F:2-isopropylmalate synthase activity"/>
    <property type="evidence" value="ECO:0007669"/>
    <property type="project" value="UniProtKB-UniRule"/>
</dbReference>
<dbReference type="GO" id="GO:0003985">
    <property type="term" value="F:acetyl-CoA C-acetyltransferase activity"/>
    <property type="evidence" value="ECO:0007669"/>
    <property type="project" value="UniProtKB-UniRule"/>
</dbReference>
<dbReference type="GO" id="GO:0030145">
    <property type="term" value="F:manganese ion binding"/>
    <property type="evidence" value="ECO:0007669"/>
    <property type="project" value="UniProtKB-UniRule"/>
</dbReference>
<dbReference type="GO" id="GO:0009098">
    <property type="term" value="P:L-leucine biosynthetic process"/>
    <property type="evidence" value="ECO:0007669"/>
    <property type="project" value="UniProtKB-UniRule"/>
</dbReference>
<dbReference type="CDD" id="cd07940">
    <property type="entry name" value="DRE_TIM_IPMS"/>
    <property type="match status" value="1"/>
</dbReference>
<dbReference type="FunFam" id="1.10.238.260:FF:000001">
    <property type="entry name" value="2-isopropylmalate synthase"/>
    <property type="match status" value="1"/>
</dbReference>
<dbReference type="FunFam" id="3.20.20.70:FF:000010">
    <property type="entry name" value="2-isopropylmalate synthase"/>
    <property type="match status" value="1"/>
</dbReference>
<dbReference type="FunFam" id="3.30.160.270:FF:000001">
    <property type="entry name" value="2-isopropylmalate synthase"/>
    <property type="match status" value="1"/>
</dbReference>
<dbReference type="Gene3D" id="1.10.238.260">
    <property type="match status" value="1"/>
</dbReference>
<dbReference type="Gene3D" id="3.30.160.270">
    <property type="match status" value="1"/>
</dbReference>
<dbReference type="Gene3D" id="3.20.20.70">
    <property type="entry name" value="Aldolase class I"/>
    <property type="match status" value="1"/>
</dbReference>
<dbReference type="HAMAP" id="MF_01025">
    <property type="entry name" value="LeuA_type1"/>
    <property type="match status" value="1"/>
</dbReference>
<dbReference type="InterPro" id="IPR050073">
    <property type="entry name" value="2-IPM_HCS-like"/>
</dbReference>
<dbReference type="InterPro" id="IPR013709">
    <property type="entry name" value="2-isopropylmalate_synth_dimer"/>
</dbReference>
<dbReference type="InterPro" id="IPR002034">
    <property type="entry name" value="AIPM/Hcit_synth_CS"/>
</dbReference>
<dbReference type="InterPro" id="IPR013785">
    <property type="entry name" value="Aldolase_TIM"/>
</dbReference>
<dbReference type="InterPro" id="IPR054691">
    <property type="entry name" value="LeuA/HCS_post-cat"/>
</dbReference>
<dbReference type="InterPro" id="IPR036230">
    <property type="entry name" value="LeuA_allosteric_dom_sf"/>
</dbReference>
<dbReference type="InterPro" id="IPR005671">
    <property type="entry name" value="LeuA_bact_synth"/>
</dbReference>
<dbReference type="InterPro" id="IPR000891">
    <property type="entry name" value="PYR_CT"/>
</dbReference>
<dbReference type="NCBIfam" id="TIGR00973">
    <property type="entry name" value="leuA_bact"/>
    <property type="match status" value="1"/>
</dbReference>
<dbReference type="NCBIfam" id="NF002086">
    <property type="entry name" value="PRK00915.1-3"/>
    <property type="match status" value="1"/>
</dbReference>
<dbReference type="PANTHER" id="PTHR10277:SF9">
    <property type="entry name" value="2-ISOPROPYLMALATE SYNTHASE 1, CHLOROPLASTIC-RELATED"/>
    <property type="match status" value="1"/>
</dbReference>
<dbReference type="PANTHER" id="PTHR10277">
    <property type="entry name" value="HOMOCITRATE SYNTHASE-RELATED"/>
    <property type="match status" value="1"/>
</dbReference>
<dbReference type="Pfam" id="PF22617">
    <property type="entry name" value="HCS_D2"/>
    <property type="match status" value="1"/>
</dbReference>
<dbReference type="Pfam" id="PF00682">
    <property type="entry name" value="HMGL-like"/>
    <property type="match status" value="1"/>
</dbReference>
<dbReference type="Pfam" id="PF08502">
    <property type="entry name" value="LeuA_dimer"/>
    <property type="match status" value="1"/>
</dbReference>
<dbReference type="SMART" id="SM00917">
    <property type="entry name" value="LeuA_dimer"/>
    <property type="match status" value="1"/>
</dbReference>
<dbReference type="SUPFAM" id="SSF110921">
    <property type="entry name" value="2-isopropylmalate synthase LeuA, allosteric (dimerisation) domain"/>
    <property type="match status" value="1"/>
</dbReference>
<dbReference type="SUPFAM" id="SSF51569">
    <property type="entry name" value="Aldolase"/>
    <property type="match status" value="1"/>
</dbReference>
<dbReference type="PROSITE" id="PS00815">
    <property type="entry name" value="AIPM_HOMOCIT_SYNTH_1"/>
    <property type="match status" value="1"/>
</dbReference>
<dbReference type="PROSITE" id="PS00816">
    <property type="entry name" value="AIPM_HOMOCIT_SYNTH_2"/>
    <property type="match status" value="1"/>
</dbReference>
<dbReference type="PROSITE" id="PS50991">
    <property type="entry name" value="PYR_CT"/>
    <property type="match status" value="1"/>
</dbReference>
<proteinExistence type="inferred from homology"/>
<reference key="1">
    <citation type="journal article" date="2008" name="Proc. Natl. Acad. Sci. U.S.A.">
        <title>The genome of Cyanothece 51142, a unicellular diazotrophic cyanobacterium important in the marine nitrogen cycle.</title>
        <authorList>
            <person name="Welsh E.A."/>
            <person name="Liberton M."/>
            <person name="Stoeckel J."/>
            <person name="Loh T."/>
            <person name="Elvitigala T."/>
            <person name="Wang C."/>
            <person name="Wollam A."/>
            <person name="Fulton R.S."/>
            <person name="Clifton S.W."/>
            <person name="Jacobs J.M."/>
            <person name="Aurora R."/>
            <person name="Ghosh B.K."/>
            <person name="Sherman L.A."/>
            <person name="Smith R.D."/>
            <person name="Wilson R.K."/>
            <person name="Pakrasi H.B."/>
        </authorList>
    </citation>
    <scope>NUCLEOTIDE SEQUENCE [LARGE SCALE GENOMIC DNA]</scope>
    <source>
        <strain>ATCC 51142 / BH68</strain>
    </source>
</reference>
<feature type="chain" id="PRO_1000149172" description="2-isopropylmalate synthase">
    <location>
        <begin position="1"/>
        <end position="537"/>
    </location>
</feature>
<feature type="domain" description="Pyruvate carboxyltransferase" evidence="1">
    <location>
        <begin position="8"/>
        <end position="273"/>
    </location>
</feature>
<feature type="region of interest" description="Regulatory domain" evidence="1">
    <location>
        <begin position="408"/>
        <end position="537"/>
    </location>
</feature>
<feature type="binding site" evidence="1">
    <location>
        <position position="17"/>
    </location>
    <ligand>
        <name>Mn(2+)</name>
        <dbReference type="ChEBI" id="CHEBI:29035"/>
    </ligand>
</feature>
<feature type="binding site" evidence="1">
    <location>
        <position position="208"/>
    </location>
    <ligand>
        <name>Mn(2+)</name>
        <dbReference type="ChEBI" id="CHEBI:29035"/>
    </ligand>
</feature>
<feature type="binding site" evidence="1">
    <location>
        <position position="210"/>
    </location>
    <ligand>
        <name>Mn(2+)</name>
        <dbReference type="ChEBI" id="CHEBI:29035"/>
    </ligand>
</feature>
<feature type="binding site" evidence="1">
    <location>
        <position position="244"/>
    </location>
    <ligand>
        <name>Mn(2+)</name>
        <dbReference type="ChEBI" id="CHEBI:29035"/>
    </ligand>
</feature>
<comment type="function">
    <text evidence="1">Catalyzes the condensation of the acetyl group of acetyl-CoA with 3-methyl-2-oxobutanoate (2-ketoisovalerate) to form 3-carboxy-3-hydroxy-4-methylpentanoate (2-isopropylmalate).</text>
</comment>
<comment type="catalytic activity">
    <reaction evidence="1">
        <text>3-methyl-2-oxobutanoate + acetyl-CoA + H2O = (2S)-2-isopropylmalate + CoA + H(+)</text>
        <dbReference type="Rhea" id="RHEA:21524"/>
        <dbReference type="ChEBI" id="CHEBI:1178"/>
        <dbReference type="ChEBI" id="CHEBI:11851"/>
        <dbReference type="ChEBI" id="CHEBI:15377"/>
        <dbReference type="ChEBI" id="CHEBI:15378"/>
        <dbReference type="ChEBI" id="CHEBI:57287"/>
        <dbReference type="ChEBI" id="CHEBI:57288"/>
        <dbReference type="EC" id="2.3.3.13"/>
    </reaction>
</comment>
<comment type="cofactor">
    <cofactor evidence="1">
        <name>Mn(2+)</name>
        <dbReference type="ChEBI" id="CHEBI:29035"/>
    </cofactor>
</comment>
<comment type="pathway">
    <text evidence="1">Amino-acid biosynthesis; L-leucine biosynthesis; L-leucine from 3-methyl-2-oxobutanoate: step 1/4.</text>
</comment>
<comment type="subunit">
    <text evidence="1">Homodimer.</text>
</comment>
<comment type="subcellular location">
    <subcellularLocation>
        <location evidence="1">Cytoplasm</location>
    </subcellularLocation>
</comment>
<comment type="similarity">
    <text evidence="1">Belongs to the alpha-IPM synthase/homocitrate synthase family. LeuA type 1 subfamily.</text>
</comment>